<accession>A7N9N4</accession>
<dbReference type="EC" id="2.5.1.141" evidence="1"/>
<dbReference type="EMBL" id="CP000803">
    <property type="protein sequence ID" value="ABU60687.1"/>
    <property type="molecule type" value="Genomic_DNA"/>
</dbReference>
<dbReference type="RefSeq" id="WP_010031089.1">
    <property type="nucleotide sequence ID" value="NC_009749.1"/>
</dbReference>
<dbReference type="SMR" id="A7N9N4"/>
<dbReference type="KEGG" id="fta:FTA_0210"/>
<dbReference type="HOGENOM" id="CLU_029631_0_0_6"/>
<dbReference type="UniPathway" id="UPA00834">
    <property type="reaction ID" value="UER00712"/>
</dbReference>
<dbReference type="GO" id="GO:0005886">
    <property type="term" value="C:plasma membrane"/>
    <property type="evidence" value="ECO:0007669"/>
    <property type="project" value="UniProtKB-SubCell"/>
</dbReference>
<dbReference type="GO" id="GO:0008495">
    <property type="term" value="F:protoheme IX farnesyltransferase activity"/>
    <property type="evidence" value="ECO:0007669"/>
    <property type="project" value="UniProtKB-UniRule"/>
</dbReference>
<dbReference type="GO" id="GO:0048034">
    <property type="term" value="P:heme O biosynthetic process"/>
    <property type="evidence" value="ECO:0007669"/>
    <property type="project" value="UniProtKB-UniRule"/>
</dbReference>
<dbReference type="CDD" id="cd13957">
    <property type="entry name" value="PT_UbiA_Cox10"/>
    <property type="match status" value="1"/>
</dbReference>
<dbReference type="Gene3D" id="1.10.357.140">
    <property type="entry name" value="UbiA prenyltransferase"/>
    <property type="match status" value="1"/>
</dbReference>
<dbReference type="HAMAP" id="MF_00154">
    <property type="entry name" value="CyoE_CtaB"/>
    <property type="match status" value="1"/>
</dbReference>
<dbReference type="InterPro" id="IPR006369">
    <property type="entry name" value="Protohaem_IX_farnesylTrfase"/>
</dbReference>
<dbReference type="InterPro" id="IPR000537">
    <property type="entry name" value="UbiA_prenyltransferase"/>
</dbReference>
<dbReference type="InterPro" id="IPR030470">
    <property type="entry name" value="UbiA_prenylTrfase_CS"/>
</dbReference>
<dbReference type="InterPro" id="IPR044878">
    <property type="entry name" value="UbiA_sf"/>
</dbReference>
<dbReference type="NCBIfam" id="TIGR01473">
    <property type="entry name" value="cyoE_ctaB"/>
    <property type="match status" value="1"/>
</dbReference>
<dbReference type="NCBIfam" id="NF003348">
    <property type="entry name" value="PRK04375.1-1"/>
    <property type="match status" value="1"/>
</dbReference>
<dbReference type="PANTHER" id="PTHR43448">
    <property type="entry name" value="PROTOHEME IX FARNESYLTRANSFERASE, MITOCHONDRIAL"/>
    <property type="match status" value="1"/>
</dbReference>
<dbReference type="PANTHER" id="PTHR43448:SF2">
    <property type="entry name" value="PROTOHEME IX FARNESYLTRANSFERASE, MITOCHONDRIAL"/>
    <property type="match status" value="1"/>
</dbReference>
<dbReference type="Pfam" id="PF01040">
    <property type="entry name" value="UbiA"/>
    <property type="match status" value="1"/>
</dbReference>
<dbReference type="PROSITE" id="PS00943">
    <property type="entry name" value="UBIA"/>
    <property type="match status" value="1"/>
</dbReference>
<comment type="function">
    <text evidence="1">Converts heme B (protoheme IX) to heme O by substitution of the vinyl group on carbon 2 of heme B porphyrin ring with a hydroxyethyl farnesyl side group.</text>
</comment>
<comment type="catalytic activity">
    <reaction evidence="1">
        <text>heme b + (2E,6E)-farnesyl diphosphate + H2O = Fe(II)-heme o + diphosphate</text>
        <dbReference type="Rhea" id="RHEA:28070"/>
        <dbReference type="ChEBI" id="CHEBI:15377"/>
        <dbReference type="ChEBI" id="CHEBI:33019"/>
        <dbReference type="ChEBI" id="CHEBI:60344"/>
        <dbReference type="ChEBI" id="CHEBI:60530"/>
        <dbReference type="ChEBI" id="CHEBI:175763"/>
        <dbReference type="EC" id="2.5.1.141"/>
    </reaction>
</comment>
<comment type="pathway">
    <text evidence="1">Porphyrin-containing compound metabolism; heme O biosynthesis; heme O from protoheme: step 1/1.</text>
</comment>
<comment type="subcellular location">
    <subcellularLocation>
        <location evidence="1">Cell inner membrane</location>
        <topology evidence="1">Multi-pass membrane protein</topology>
    </subcellularLocation>
</comment>
<comment type="miscellaneous">
    <text evidence="1">Carbon 2 of the heme B porphyrin ring is defined according to the Fischer nomenclature.</text>
</comment>
<comment type="similarity">
    <text evidence="1">Belongs to the UbiA prenyltransferase family. Protoheme IX farnesyltransferase subfamily.</text>
</comment>
<feature type="chain" id="PRO_0000326895" description="Protoheme IX farnesyltransferase">
    <location>
        <begin position="1"/>
        <end position="282"/>
    </location>
</feature>
<feature type="transmembrane region" description="Helical" evidence="1">
    <location>
        <begin position="9"/>
        <end position="29"/>
    </location>
</feature>
<feature type="transmembrane region" description="Helical" evidence="1">
    <location>
        <begin position="39"/>
        <end position="59"/>
    </location>
</feature>
<feature type="transmembrane region" description="Helical" evidence="1">
    <location>
        <begin position="79"/>
        <end position="99"/>
    </location>
</feature>
<feature type="transmembrane region" description="Helical" evidence="1">
    <location>
        <begin position="102"/>
        <end position="122"/>
    </location>
</feature>
<feature type="transmembrane region" description="Helical" evidence="1">
    <location>
        <begin position="139"/>
        <end position="159"/>
    </location>
</feature>
<feature type="transmembrane region" description="Helical" evidence="1">
    <location>
        <begin position="165"/>
        <end position="185"/>
    </location>
</feature>
<feature type="transmembrane region" description="Helical" evidence="1">
    <location>
        <begin position="210"/>
        <end position="230"/>
    </location>
</feature>
<feature type="transmembrane region" description="Helical" evidence="1">
    <location>
        <begin position="231"/>
        <end position="251"/>
    </location>
</feature>
<feature type="transmembrane region" description="Helical" evidence="1">
    <location>
        <begin position="261"/>
        <end position="281"/>
    </location>
</feature>
<reference key="1">
    <citation type="journal article" date="2009" name="PLoS ONE">
        <title>Complete genome sequence of Francisella tularensis subspecies holarctica FTNF002-00.</title>
        <authorList>
            <person name="Barabote R.D."/>
            <person name="Xie G."/>
            <person name="Brettin T.S."/>
            <person name="Hinrichs S.H."/>
            <person name="Fey P.D."/>
            <person name="Jay J.J."/>
            <person name="Engle J.L."/>
            <person name="Godbole S.D."/>
            <person name="Noronha J.M."/>
            <person name="Scheuermann R.H."/>
            <person name="Zhou L.W."/>
            <person name="Lion C."/>
            <person name="Dempsey M.P."/>
        </authorList>
    </citation>
    <scope>NUCLEOTIDE SEQUENCE [LARGE SCALE GENOMIC DNA]</scope>
    <source>
        <strain>FTNF002-00 / FTA</strain>
    </source>
</reference>
<protein>
    <recommendedName>
        <fullName evidence="1">Protoheme IX farnesyltransferase</fullName>
        <ecNumber evidence="1">2.5.1.141</ecNumber>
    </recommendedName>
    <alternativeName>
        <fullName evidence="1">Heme B farnesyltransferase</fullName>
    </alternativeName>
    <alternativeName>
        <fullName evidence="1">Heme O synthase</fullName>
    </alternativeName>
</protein>
<sequence length="282" mass="31483">MYFKRYLQLAKPGIIFGNLITLTGGFLLATHREIGFEYLPLFVYVMIGVALMIAAGCVFNNIYDKDIDSSMTRTQNRPLVTGDISVIQATIYGTILLILSCLVLYYLVNLLTLWIIIIGFIVYVGIYTVSKRLTIHATVLGGISGAIPPVAGYTAVVNILDYNALALFLILFFWQIPHSYAIAMLYIDDYKKVKLPMLPIVKGIACTKKIMLFYLALFVVSCALPAVLGSADLFSFIVCMLVALFWMYKSIQSYRTDTDRVFAKTVFKFSIIVITAICLTMG</sequence>
<proteinExistence type="inferred from homology"/>
<evidence type="ECO:0000255" key="1">
    <source>
        <dbReference type="HAMAP-Rule" id="MF_00154"/>
    </source>
</evidence>
<gene>
    <name evidence="1" type="primary">cyoE</name>
    <name type="ordered locus">FTA_0210</name>
</gene>
<name>CYOE_FRATF</name>
<keyword id="KW-0997">Cell inner membrane</keyword>
<keyword id="KW-1003">Cell membrane</keyword>
<keyword id="KW-0350">Heme biosynthesis</keyword>
<keyword id="KW-0472">Membrane</keyword>
<keyword id="KW-0808">Transferase</keyword>
<keyword id="KW-0812">Transmembrane</keyword>
<keyword id="KW-1133">Transmembrane helix</keyword>
<organism>
    <name type="scientific">Francisella tularensis subsp. holarctica (strain FTNF002-00 / FTA)</name>
    <dbReference type="NCBI Taxonomy" id="458234"/>
    <lineage>
        <taxon>Bacteria</taxon>
        <taxon>Pseudomonadati</taxon>
        <taxon>Pseudomonadota</taxon>
        <taxon>Gammaproteobacteria</taxon>
        <taxon>Thiotrichales</taxon>
        <taxon>Francisellaceae</taxon>
        <taxon>Francisella</taxon>
    </lineage>
</organism>